<protein>
    <recommendedName>
        <fullName evidence="1">tRNA (guanine-N(7)-)-methyltransferase</fullName>
        <ecNumber evidence="1">2.1.1.33</ecNumber>
    </recommendedName>
    <alternativeName>
        <fullName evidence="1">Transfer RNA methyltransferase 8</fullName>
    </alternativeName>
    <alternativeName>
        <fullName evidence="1">tRNA (guanine(46)-N(7))-methyltransferase</fullName>
    </alternativeName>
    <alternativeName>
        <fullName evidence="1">tRNA(m7G46)-methyltransferase</fullName>
    </alternativeName>
</protein>
<proteinExistence type="evidence at protein level"/>
<accession>Q12009</accession>
<accession>D6VRF3</accession>
<organism>
    <name type="scientific">Saccharomyces cerevisiae (strain ATCC 204508 / S288c)</name>
    <name type="common">Baker's yeast</name>
    <dbReference type="NCBI Taxonomy" id="559292"/>
    <lineage>
        <taxon>Eukaryota</taxon>
        <taxon>Fungi</taxon>
        <taxon>Dikarya</taxon>
        <taxon>Ascomycota</taxon>
        <taxon>Saccharomycotina</taxon>
        <taxon>Saccharomycetes</taxon>
        <taxon>Saccharomycetales</taxon>
        <taxon>Saccharomycetaceae</taxon>
        <taxon>Saccharomyces</taxon>
    </lineage>
</organism>
<keyword id="KW-0002">3D-structure</keyword>
<keyword id="KW-0489">Methyltransferase</keyword>
<keyword id="KW-0539">Nucleus</keyword>
<keyword id="KW-0597">Phosphoprotein</keyword>
<keyword id="KW-1185">Reference proteome</keyword>
<keyword id="KW-0694">RNA-binding</keyword>
<keyword id="KW-0949">S-adenosyl-L-methionine</keyword>
<keyword id="KW-0808">Transferase</keyword>
<keyword id="KW-0819">tRNA processing</keyword>
<keyword id="KW-0820">tRNA-binding</keyword>
<sequence>MKAKPLSQDPGSKRYAYRINKEENRKELKHVKINESSLVQEGQKIDLPKKRYYRQRAHSNPFSDHQLEYPVSPQDMDWSKLYPYYKNAENGQMTKKVTIADIGCGFGGLMIDLSPAFPEDLILGMEIRVQVTNYVEDRIIALRNNTASKHGFQNINVLRGNAMKFLPNFFEKGQLSKMFFCFPDPHFKQRKHKARIITNTLLSEYAYVLKEGGVVYTITDVKDLHEWMVKHLEEHPLFERLSKEWEENDECVKIMRNATEEGKKVERKKGDKFVACFTRLPTPAIL</sequence>
<comment type="function">
    <text evidence="1 5 6">Methyltransferase that catalyzes the formation of N(7)-methylguanine at position 46 (m7G46) in tRNA, a modification required to maintain stability of tRNAs; its absence resulting in tRNA decay. Both the D-stem and T-stem structures of tRNAs are required for efficient methyltransferase activity.</text>
</comment>
<comment type="catalytic activity">
    <reaction evidence="1 4">
        <text>guanosine(46) in tRNA + S-adenosyl-L-methionine = N(7)-methylguanosine(46) in tRNA + S-adenosyl-L-homocysteine</text>
        <dbReference type="Rhea" id="RHEA:42708"/>
        <dbReference type="Rhea" id="RHEA-COMP:10188"/>
        <dbReference type="Rhea" id="RHEA-COMP:10189"/>
        <dbReference type="ChEBI" id="CHEBI:57856"/>
        <dbReference type="ChEBI" id="CHEBI:59789"/>
        <dbReference type="ChEBI" id="CHEBI:74269"/>
        <dbReference type="ChEBI" id="CHEBI:74480"/>
        <dbReference type="EC" id="2.1.1.33"/>
    </reaction>
</comment>
<comment type="pathway">
    <text evidence="1">tRNA modification; N(7)-methylguanine-tRNA biosynthesis.</text>
</comment>
<comment type="subunit">
    <text evidence="1 7">Forms a complex with TRM82.</text>
</comment>
<comment type="interaction">
    <interactant intactId="EBI-19552">
        <id>Q12009</id>
    </interactant>
    <interactant intactId="EBI-19486">
        <id>Q03774</id>
        <label>TRM82</label>
    </interactant>
    <organismsDiffer>false</organismsDiffer>
    <experiments>9</experiments>
</comment>
<comment type="subcellular location">
    <subcellularLocation>
        <location evidence="1 2">Nucleus</location>
    </subcellularLocation>
</comment>
<comment type="miscellaneous">
    <text evidence="3">Present with 2630 molecules/cell in log phase SD medium.</text>
</comment>
<comment type="similarity">
    <text evidence="1">Belongs to the class I-like SAM-binding methyltransferase superfamily. TrmB family.</text>
</comment>
<name>TRMB_YEAST</name>
<feature type="chain" id="PRO_0000171437" description="tRNA (guanine-N(7)-)-methyltransferase">
    <location>
        <begin position="1"/>
        <end position="286"/>
    </location>
</feature>
<feature type="active site" evidence="8">
    <location>
        <position position="184"/>
    </location>
</feature>
<feature type="binding site" evidence="1 7">
    <location>
        <position position="103"/>
    </location>
    <ligand>
        <name>S-adenosyl-L-methionine</name>
        <dbReference type="ChEBI" id="CHEBI:59789"/>
    </ligand>
</feature>
<feature type="binding site">
    <location>
        <begin position="126"/>
        <end position="127"/>
    </location>
    <ligand>
        <name>S-adenosyl-L-methionine</name>
        <dbReference type="ChEBI" id="CHEBI:59789"/>
    </ligand>
</feature>
<feature type="binding site">
    <location>
        <begin position="161"/>
        <end position="162"/>
    </location>
    <ligand>
        <name>S-adenosyl-L-methionine</name>
        <dbReference type="ChEBI" id="CHEBI:59789"/>
    </ligand>
</feature>
<feature type="binding site" evidence="1 7">
    <location>
        <position position="181"/>
    </location>
    <ligand>
        <name>S-adenosyl-L-methionine</name>
        <dbReference type="ChEBI" id="CHEBI:59789"/>
    </ligand>
</feature>
<feature type="binding site">
    <location>
        <begin position="259"/>
        <end position="261"/>
    </location>
    <ligand>
        <name>S-adenosyl-L-methionine</name>
        <dbReference type="ChEBI" id="CHEBI:59789"/>
    </ligand>
</feature>
<feature type="modified residue" description="Phosphoserine; by ATM or ATR" evidence="10">
    <location>
        <position position="7"/>
    </location>
</feature>
<feature type="modified residue" description="Phosphoserine" evidence="9 11">
    <location>
        <position position="59"/>
    </location>
</feature>
<feature type="helix" evidence="13">
    <location>
        <begin position="63"/>
        <end position="65"/>
    </location>
</feature>
<feature type="helix" evidence="12">
    <location>
        <begin position="73"/>
        <end position="75"/>
    </location>
</feature>
<feature type="helix" evidence="13">
    <location>
        <begin position="78"/>
        <end position="80"/>
    </location>
</feature>
<feature type="helix" evidence="13">
    <location>
        <begin position="83"/>
        <end position="85"/>
    </location>
</feature>
<feature type="turn" evidence="12">
    <location>
        <begin position="88"/>
        <end position="91"/>
    </location>
</feature>
<feature type="strand" evidence="12">
    <location>
        <begin position="92"/>
        <end position="94"/>
    </location>
</feature>
<feature type="strand" evidence="13">
    <location>
        <begin position="97"/>
        <end position="102"/>
    </location>
</feature>
<feature type="helix" evidence="13">
    <location>
        <begin position="108"/>
        <end position="116"/>
    </location>
</feature>
<feature type="strand" evidence="13">
    <location>
        <begin position="120"/>
        <end position="127"/>
    </location>
</feature>
<feature type="helix" evidence="13">
    <location>
        <begin position="129"/>
        <end position="144"/>
    </location>
</feature>
<feature type="strand" evidence="12">
    <location>
        <begin position="147"/>
        <end position="150"/>
    </location>
</feature>
<feature type="turn" evidence="13">
    <location>
        <begin position="151"/>
        <end position="154"/>
    </location>
</feature>
<feature type="strand" evidence="13">
    <location>
        <begin position="155"/>
        <end position="159"/>
    </location>
</feature>
<feature type="helix" evidence="13">
    <location>
        <begin position="166"/>
        <end position="168"/>
    </location>
</feature>
<feature type="strand" evidence="13">
    <location>
        <begin position="175"/>
        <end position="182"/>
    </location>
</feature>
<feature type="helix" evidence="13">
    <location>
        <begin position="199"/>
        <end position="208"/>
    </location>
</feature>
<feature type="strand" evidence="13">
    <location>
        <begin position="209"/>
        <end position="220"/>
    </location>
</feature>
<feature type="helix" evidence="13">
    <location>
        <begin position="222"/>
        <end position="234"/>
    </location>
</feature>
<feature type="strand" evidence="13">
    <location>
        <begin position="238"/>
        <end position="240"/>
    </location>
</feature>
<feature type="helix" evidence="13">
    <location>
        <begin position="243"/>
        <end position="247"/>
    </location>
</feature>
<feature type="helix" evidence="13">
    <location>
        <begin position="250"/>
        <end position="257"/>
    </location>
</feature>
<feature type="helix" evidence="13">
    <location>
        <begin position="260"/>
        <end position="267"/>
    </location>
</feature>
<feature type="strand" evidence="13">
    <location>
        <begin position="273"/>
        <end position="279"/>
    </location>
</feature>
<evidence type="ECO:0000255" key="1">
    <source>
        <dbReference type="HAMAP-Rule" id="MF_03055"/>
    </source>
</evidence>
<evidence type="ECO:0000269" key="2">
    <source>
    </source>
</evidence>
<evidence type="ECO:0000269" key="3">
    <source>
    </source>
</evidence>
<evidence type="ECO:0000269" key="4">
    <source>
    </source>
</evidence>
<evidence type="ECO:0000269" key="5">
    <source>
    </source>
</evidence>
<evidence type="ECO:0000269" key="6">
    <source>
    </source>
</evidence>
<evidence type="ECO:0000269" key="7">
    <source>
    </source>
</evidence>
<evidence type="ECO:0000305" key="8"/>
<evidence type="ECO:0007744" key="9">
    <source>
    </source>
</evidence>
<evidence type="ECO:0007744" key="10">
    <source>
    </source>
</evidence>
<evidence type="ECO:0007744" key="11">
    <source>
    </source>
</evidence>
<evidence type="ECO:0007829" key="12">
    <source>
        <dbReference type="PDB" id="2VDU"/>
    </source>
</evidence>
<evidence type="ECO:0007829" key="13">
    <source>
        <dbReference type="PDB" id="2VDV"/>
    </source>
</evidence>
<gene>
    <name evidence="1" type="primary">TRM8</name>
    <name type="ordered locus">YDL201W</name>
    <name type="ORF">D1075</name>
</gene>
<dbReference type="EC" id="2.1.1.33" evidence="1"/>
<dbReference type="EMBL" id="X99000">
    <property type="protein sequence ID" value="CAA67468.1"/>
    <property type="molecule type" value="Genomic_DNA"/>
</dbReference>
<dbReference type="EMBL" id="Z74249">
    <property type="protein sequence ID" value="CAA98779.1"/>
    <property type="molecule type" value="Genomic_DNA"/>
</dbReference>
<dbReference type="EMBL" id="BK006938">
    <property type="protein sequence ID" value="DAA11663.1"/>
    <property type="molecule type" value="Genomic_DNA"/>
</dbReference>
<dbReference type="PIR" id="S67760">
    <property type="entry name" value="S67760"/>
</dbReference>
<dbReference type="RefSeq" id="NP_010080.1">
    <property type="nucleotide sequence ID" value="NM_001180261.1"/>
</dbReference>
<dbReference type="PDB" id="2VDU">
    <property type="method" value="X-ray"/>
    <property type="resolution" value="2.40 A"/>
    <property type="chains" value="E/F=39-286"/>
</dbReference>
<dbReference type="PDB" id="2VDV">
    <property type="method" value="X-ray"/>
    <property type="resolution" value="2.30 A"/>
    <property type="chains" value="E/F=47-286"/>
</dbReference>
<dbReference type="PDBsum" id="2VDU"/>
<dbReference type="PDBsum" id="2VDV"/>
<dbReference type="SMR" id="Q12009"/>
<dbReference type="BioGRID" id="31845">
    <property type="interactions" value="99"/>
</dbReference>
<dbReference type="ComplexPortal" id="CPX-1632">
    <property type="entry name" value="tRNA (guanine-N(7)-)-methyltransferase"/>
</dbReference>
<dbReference type="DIP" id="DIP-8614N"/>
<dbReference type="FunCoup" id="Q12009">
    <property type="interactions" value="646"/>
</dbReference>
<dbReference type="IntAct" id="Q12009">
    <property type="interactions" value="19"/>
</dbReference>
<dbReference type="MINT" id="Q12009"/>
<dbReference type="STRING" id="4932.YDL201W"/>
<dbReference type="iPTMnet" id="Q12009"/>
<dbReference type="PaxDb" id="4932-YDL201W"/>
<dbReference type="PeptideAtlas" id="Q12009"/>
<dbReference type="EnsemblFungi" id="YDL201W_mRNA">
    <property type="protein sequence ID" value="YDL201W"/>
    <property type="gene ID" value="YDL201W"/>
</dbReference>
<dbReference type="GeneID" id="851326"/>
<dbReference type="KEGG" id="sce:YDL201W"/>
<dbReference type="AGR" id="SGD:S000002360"/>
<dbReference type="SGD" id="S000002360">
    <property type="gene designation" value="TRM8"/>
</dbReference>
<dbReference type="VEuPathDB" id="FungiDB:YDL201W"/>
<dbReference type="eggNOG" id="KOG3115">
    <property type="taxonomic scope" value="Eukaryota"/>
</dbReference>
<dbReference type="GeneTree" id="ENSGT00390000017840"/>
<dbReference type="HOGENOM" id="CLU_050910_3_1_1"/>
<dbReference type="InParanoid" id="Q12009"/>
<dbReference type="OMA" id="LPNYFAK"/>
<dbReference type="OrthoDB" id="47276at2759"/>
<dbReference type="BioCyc" id="YEAST:YDL201W-MONOMER"/>
<dbReference type="BRENDA" id="2.1.1.33">
    <property type="organism ID" value="984"/>
</dbReference>
<dbReference type="UniPathway" id="UPA00989"/>
<dbReference type="BioGRID-ORCS" id="851326">
    <property type="hits" value="8 hits in 10 CRISPR screens"/>
</dbReference>
<dbReference type="EvolutionaryTrace" id="Q12009"/>
<dbReference type="PRO" id="PR:Q12009"/>
<dbReference type="Proteomes" id="UP000002311">
    <property type="component" value="Chromosome IV"/>
</dbReference>
<dbReference type="RNAct" id="Q12009">
    <property type="molecule type" value="protein"/>
</dbReference>
<dbReference type="GO" id="GO:0005654">
    <property type="term" value="C:nucleoplasm"/>
    <property type="evidence" value="ECO:0000304"/>
    <property type="project" value="Reactome"/>
</dbReference>
<dbReference type="GO" id="GO:0005634">
    <property type="term" value="C:nucleus"/>
    <property type="evidence" value="ECO:0007005"/>
    <property type="project" value="SGD"/>
</dbReference>
<dbReference type="GO" id="GO:0106143">
    <property type="term" value="C:tRNA (m7G46) methyltransferase complex"/>
    <property type="evidence" value="ECO:0000314"/>
    <property type="project" value="SGD"/>
</dbReference>
<dbReference type="GO" id="GO:0043527">
    <property type="term" value="C:tRNA methyltransferase complex"/>
    <property type="evidence" value="ECO:0000353"/>
    <property type="project" value="ComplexPortal"/>
</dbReference>
<dbReference type="GO" id="GO:0008176">
    <property type="term" value="F:tRNA (guanine(46)-N7)-methyltransferase activity"/>
    <property type="evidence" value="ECO:0000314"/>
    <property type="project" value="SGD"/>
</dbReference>
<dbReference type="GO" id="GO:0000049">
    <property type="term" value="F:tRNA binding"/>
    <property type="evidence" value="ECO:0007669"/>
    <property type="project" value="UniProtKB-UniRule"/>
</dbReference>
<dbReference type="GO" id="GO:0036265">
    <property type="term" value="P:RNA (guanine-N7)-methylation"/>
    <property type="evidence" value="ECO:0000318"/>
    <property type="project" value="GO_Central"/>
</dbReference>
<dbReference type="GO" id="GO:0106004">
    <property type="term" value="P:tRNA (guanine-N7)-methylation"/>
    <property type="evidence" value="ECO:0000314"/>
    <property type="project" value="SGD"/>
</dbReference>
<dbReference type="GO" id="GO:0030488">
    <property type="term" value="P:tRNA methylation"/>
    <property type="evidence" value="ECO:0000314"/>
    <property type="project" value="ComplexPortal"/>
</dbReference>
<dbReference type="CDD" id="cd02440">
    <property type="entry name" value="AdoMet_MTases"/>
    <property type="match status" value="1"/>
</dbReference>
<dbReference type="FunFam" id="3.40.50.150:FF:000060">
    <property type="entry name" value="tRNA (guanine-N(7)-)-methyltransferase"/>
    <property type="match status" value="1"/>
</dbReference>
<dbReference type="Gene3D" id="3.40.50.150">
    <property type="entry name" value="Vaccinia Virus protein VP39"/>
    <property type="match status" value="1"/>
</dbReference>
<dbReference type="HAMAP" id="MF_03055">
    <property type="entry name" value="tRNA_methyltr_TrmB_euk"/>
    <property type="match status" value="1"/>
</dbReference>
<dbReference type="InterPro" id="IPR029063">
    <property type="entry name" value="SAM-dependent_MTases_sf"/>
</dbReference>
<dbReference type="InterPro" id="IPR025763">
    <property type="entry name" value="Trm8_euk"/>
</dbReference>
<dbReference type="InterPro" id="IPR003358">
    <property type="entry name" value="tRNA_(Gua-N-7)_MeTrfase_Trmb"/>
</dbReference>
<dbReference type="NCBIfam" id="TIGR00091">
    <property type="entry name" value="tRNA (guanosine(46)-N7)-methyltransferase TrmB"/>
    <property type="match status" value="1"/>
</dbReference>
<dbReference type="PANTHER" id="PTHR23417">
    <property type="entry name" value="3-DEOXY-D-MANNO-OCTULOSONIC-ACID TRANSFERASE/TRNA GUANINE-N 7 - -METHYLTRANSFERASE"/>
    <property type="match status" value="1"/>
</dbReference>
<dbReference type="PANTHER" id="PTHR23417:SF16">
    <property type="entry name" value="TRNA (GUANINE-N(7)-)-METHYLTRANSFERASE"/>
    <property type="match status" value="1"/>
</dbReference>
<dbReference type="Pfam" id="PF02390">
    <property type="entry name" value="Methyltransf_4"/>
    <property type="match status" value="1"/>
</dbReference>
<dbReference type="SUPFAM" id="SSF53335">
    <property type="entry name" value="S-adenosyl-L-methionine-dependent methyltransferases"/>
    <property type="match status" value="1"/>
</dbReference>
<dbReference type="PROSITE" id="PS51625">
    <property type="entry name" value="SAM_MT_TRMB"/>
    <property type="match status" value="1"/>
</dbReference>
<reference key="1">
    <citation type="journal article" date="1997" name="Nature">
        <title>The nucleotide sequence of Saccharomyces cerevisiae chromosome IV.</title>
        <authorList>
            <person name="Jacq C."/>
            <person name="Alt-Moerbe J."/>
            <person name="Andre B."/>
            <person name="Arnold W."/>
            <person name="Bahr A."/>
            <person name="Ballesta J.P.G."/>
            <person name="Bargues M."/>
            <person name="Baron L."/>
            <person name="Becker A."/>
            <person name="Biteau N."/>
            <person name="Bloecker H."/>
            <person name="Blugeon C."/>
            <person name="Boskovic J."/>
            <person name="Brandt P."/>
            <person name="Brueckner M."/>
            <person name="Buitrago M.J."/>
            <person name="Coster F."/>
            <person name="Delaveau T."/>
            <person name="del Rey F."/>
            <person name="Dujon B."/>
            <person name="Eide L.G."/>
            <person name="Garcia-Cantalejo J.M."/>
            <person name="Goffeau A."/>
            <person name="Gomez-Peris A."/>
            <person name="Granotier C."/>
            <person name="Hanemann V."/>
            <person name="Hankeln T."/>
            <person name="Hoheisel J.D."/>
            <person name="Jaeger W."/>
            <person name="Jimenez A."/>
            <person name="Jonniaux J.-L."/>
            <person name="Kraemer C."/>
            <person name="Kuester H."/>
            <person name="Laamanen P."/>
            <person name="Legros Y."/>
            <person name="Louis E.J."/>
            <person name="Moeller-Rieker S."/>
            <person name="Monnet A."/>
            <person name="Moro M."/>
            <person name="Mueller-Auer S."/>
            <person name="Nussbaumer B."/>
            <person name="Paricio N."/>
            <person name="Paulin L."/>
            <person name="Perea J."/>
            <person name="Perez-Alonso M."/>
            <person name="Perez-Ortin J.E."/>
            <person name="Pohl T.M."/>
            <person name="Prydz H."/>
            <person name="Purnelle B."/>
            <person name="Rasmussen S.W."/>
            <person name="Remacha M.A."/>
            <person name="Revuelta J.L."/>
            <person name="Rieger M."/>
            <person name="Salom D."/>
            <person name="Saluz H.P."/>
            <person name="Saiz J.E."/>
            <person name="Saren A.-M."/>
            <person name="Schaefer M."/>
            <person name="Scharfe M."/>
            <person name="Schmidt E.R."/>
            <person name="Schneider C."/>
            <person name="Scholler P."/>
            <person name="Schwarz S."/>
            <person name="Soler-Mira A."/>
            <person name="Urrestarazu L.A."/>
            <person name="Verhasselt P."/>
            <person name="Vissers S."/>
            <person name="Voet M."/>
            <person name="Volckaert G."/>
            <person name="Wagner G."/>
            <person name="Wambutt R."/>
            <person name="Wedler E."/>
            <person name="Wedler H."/>
            <person name="Woelfl S."/>
            <person name="Harris D.E."/>
            <person name="Bowman S."/>
            <person name="Brown D."/>
            <person name="Churcher C.M."/>
            <person name="Connor R."/>
            <person name="Dedman K."/>
            <person name="Gentles S."/>
            <person name="Hamlin N."/>
            <person name="Hunt S."/>
            <person name="Jones L."/>
            <person name="McDonald S."/>
            <person name="Murphy L.D."/>
            <person name="Niblett D."/>
            <person name="Odell C."/>
            <person name="Oliver K."/>
            <person name="Rajandream M.A."/>
            <person name="Richards C."/>
            <person name="Shore L."/>
            <person name="Walsh S.V."/>
            <person name="Barrell B.G."/>
            <person name="Dietrich F.S."/>
            <person name="Mulligan J.T."/>
            <person name="Allen E."/>
            <person name="Araujo R."/>
            <person name="Aviles E."/>
            <person name="Berno A."/>
            <person name="Carpenter J."/>
            <person name="Chen E."/>
            <person name="Cherry J.M."/>
            <person name="Chung E."/>
            <person name="Duncan M."/>
            <person name="Hunicke-Smith S."/>
            <person name="Hyman R.W."/>
            <person name="Komp C."/>
            <person name="Lashkari D."/>
            <person name="Lew H."/>
            <person name="Lin D."/>
            <person name="Mosedale D."/>
            <person name="Nakahara K."/>
            <person name="Namath A."/>
            <person name="Oefner P."/>
            <person name="Oh C."/>
            <person name="Petel F.X."/>
            <person name="Roberts D."/>
            <person name="Schramm S."/>
            <person name="Schroeder M."/>
            <person name="Shogren T."/>
            <person name="Shroff N."/>
            <person name="Winant A."/>
            <person name="Yelton M.A."/>
            <person name="Botstein D."/>
            <person name="Davis R.W."/>
            <person name="Johnston M."/>
            <person name="Andrews S."/>
            <person name="Brinkman R."/>
            <person name="Cooper J."/>
            <person name="Ding H."/>
            <person name="Du Z."/>
            <person name="Favello A."/>
            <person name="Fulton L."/>
            <person name="Gattung S."/>
            <person name="Greco T."/>
            <person name="Hallsworth K."/>
            <person name="Hawkins J."/>
            <person name="Hillier L.W."/>
            <person name="Jier M."/>
            <person name="Johnson D."/>
            <person name="Johnston L."/>
            <person name="Kirsten J."/>
            <person name="Kucaba T."/>
            <person name="Langston Y."/>
            <person name="Latreille P."/>
            <person name="Le T."/>
            <person name="Mardis E."/>
            <person name="Menezes S."/>
            <person name="Miller N."/>
            <person name="Nhan M."/>
            <person name="Pauley A."/>
            <person name="Peluso D."/>
            <person name="Rifkin L."/>
            <person name="Riles L."/>
            <person name="Taich A."/>
            <person name="Trevaskis E."/>
            <person name="Vignati D."/>
            <person name="Wilcox L."/>
            <person name="Wohldman P."/>
            <person name="Vaudin M."/>
            <person name="Wilson R."/>
            <person name="Waterston R."/>
            <person name="Albermann K."/>
            <person name="Hani J."/>
            <person name="Heumann K."/>
            <person name="Kleine K."/>
            <person name="Mewes H.-W."/>
            <person name="Zollner A."/>
            <person name="Zaccaria P."/>
        </authorList>
    </citation>
    <scope>NUCLEOTIDE SEQUENCE [LARGE SCALE GENOMIC DNA]</scope>
    <source>
        <strain>ATCC 204508 / S288c</strain>
    </source>
</reference>
<reference key="2">
    <citation type="journal article" date="2014" name="G3 (Bethesda)">
        <title>The reference genome sequence of Saccharomyces cerevisiae: Then and now.</title>
        <authorList>
            <person name="Engel S.R."/>
            <person name="Dietrich F.S."/>
            <person name="Fisk D.G."/>
            <person name="Binkley G."/>
            <person name="Balakrishnan R."/>
            <person name="Costanzo M.C."/>
            <person name="Dwight S.S."/>
            <person name="Hitz B.C."/>
            <person name="Karra K."/>
            <person name="Nash R.S."/>
            <person name="Weng S."/>
            <person name="Wong E.D."/>
            <person name="Lloyd P."/>
            <person name="Skrzypek M.S."/>
            <person name="Miyasato S.R."/>
            <person name="Simison M."/>
            <person name="Cherry J.M."/>
        </authorList>
    </citation>
    <scope>GENOME REANNOTATION</scope>
    <source>
        <strain>ATCC 204508 / S288c</strain>
    </source>
</reference>
<reference key="3">
    <citation type="journal article" date="2002" name="RNA">
        <title>Two proteins that form a complex are required for 7-methylguanosine modification of yeast tRNA.</title>
        <authorList>
            <person name="Alexandrov A."/>
            <person name="Martzen M.R."/>
            <person name="Phizicky E.M."/>
        </authorList>
    </citation>
    <scope>CHARACTERIZATION</scope>
    <scope>INTERACTION WITH TRM82</scope>
</reference>
<reference key="4">
    <citation type="journal article" date="2003" name="Nature">
        <title>Global analysis of protein localization in budding yeast.</title>
        <authorList>
            <person name="Huh W.-K."/>
            <person name="Falvo J.V."/>
            <person name="Gerke L.C."/>
            <person name="Carroll A.S."/>
            <person name="Howson R.W."/>
            <person name="Weissman J.S."/>
            <person name="O'Shea E.K."/>
        </authorList>
    </citation>
    <scope>SUBCELLULAR LOCATION [LARGE SCALE ANALYSIS]</scope>
</reference>
<reference key="5">
    <citation type="journal article" date="2003" name="Nature">
        <title>Global analysis of protein expression in yeast.</title>
        <authorList>
            <person name="Ghaemmaghami S."/>
            <person name="Huh W.-K."/>
            <person name="Bower K."/>
            <person name="Howson R.W."/>
            <person name="Belle A."/>
            <person name="Dephoure N."/>
            <person name="O'Shea E.K."/>
            <person name="Weissman J.S."/>
        </authorList>
    </citation>
    <scope>LEVEL OF PROTEIN EXPRESSION [LARGE SCALE ANALYSIS]</scope>
</reference>
<reference key="6">
    <citation type="journal article" date="2005" name="RNA">
        <title>tRNA m7G methyltransferase Trm8p/Trm82p: evidence linking activity to a growth phenotype and implicating Trm82p in maintaining levels of active Trm8p.</title>
        <authorList>
            <person name="Alexandrov A."/>
            <person name="Grayhack E.J."/>
            <person name="Phizicky E.M."/>
        </authorList>
    </citation>
    <scope>CATALYTIC ACTIVITY</scope>
    <scope>TRNA-BINDING</scope>
    <scope>INTERACTION WITH TRM82</scope>
</reference>
<reference key="7">
    <citation type="journal article" date="2006" name="Mol. Cell">
        <title>Rapid tRNA decay can result from lack of nonessential modifications.</title>
        <authorList>
            <person name="Alexandrov A."/>
            <person name="Chernyakov I."/>
            <person name="Gu W."/>
            <person name="Hiley S.L."/>
            <person name="Hughes T.R."/>
            <person name="Grayhack E.J."/>
            <person name="Phizicky E.M."/>
        </authorList>
    </citation>
    <scope>FUNCTION</scope>
</reference>
<reference key="8">
    <citation type="journal article" date="2007" name="FEBS Lett.">
        <title>RNA recognition mechanism of eukaryote tRNA (m7G46) methyltransferase (Trm8-Trm82 complex).</title>
        <authorList>
            <person name="Matsumoto K."/>
            <person name="Toyooka T."/>
            <person name="Tomikawa C."/>
            <person name="Ochi A."/>
            <person name="Takano Y."/>
            <person name="Takayanagi N."/>
            <person name="Endo Y."/>
            <person name="Hori H."/>
        </authorList>
    </citation>
    <scope>FUNCTION</scope>
</reference>
<reference key="9">
    <citation type="journal article" date="2007" name="J. Proteome Res.">
        <title>Large-scale phosphorylation analysis of alpha-factor-arrested Saccharomyces cerevisiae.</title>
        <authorList>
            <person name="Li X."/>
            <person name="Gerber S.A."/>
            <person name="Rudner A.D."/>
            <person name="Beausoleil S.A."/>
            <person name="Haas W."/>
            <person name="Villen J."/>
            <person name="Elias J.E."/>
            <person name="Gygi S.P."/>
        </authorList>
    </citation>
    <scope>PHOSPHORYLATION [LARGE SCALE ANALYSIS] AT SER-59</scope>
    <scope>IDENTIFICATION BY MASS SPECTROMETRY [LARGE SCALE ANALYSIS]</scope>
    <source>
        <strain>ADR376</strain>
    </source>
</reference>
<reference key="10">
    <citation type="journal article" date="2008" name="Mol. Cell. Proteomics">
        <title>A multidimensional chromatography technology for in-depth phosphoproteome analysis.</title>
        <authorList>
            <person name="Albuquerque C.P."/>
            <person name="Smolka M.B."/>
            <person name="Payne S.H."/>
            <person name="Bafna V."/>
            <person name="Eng J."/>
            <person name="Zhou H."/>
        </authorList>
    </citation>
    <scope>PHOSPHORYLATION [LARGE SCALE ANALYSIS] AT SER-7</scope>
    <scope>IDENTIFICATION BY MASS SPECTROMETRY [LARGE SCALE ANALYSIS]</scope>
</reference>
<reference key="11">
    <citation type="journal article" date="2009" name="Science">
        <title>Global analysis of Cdk1 substrate phosphorylation sites provides insights into evolution.</title>
        <authorList>
            <person name="Holt L.J."/>
            <person name="Tuch B.B."/>
            <person name="Villen J."/>
            <person name="Johnson A.D."/>
            <person name="Gygi S.P."/>
            <person name="Morgan D.O."/>
        </authorList>
    </citation>
    <scope>PHOSPHORYLATION [LARGE SCALE ANALYSIS] AT SER-59</scope>
    <scope>IDENTIFICATION BY MASS SPECTROMETRY [LARGE SCALE ANALYSIS]</scope>
</reference>
<reference key="12">
    <citation type="journal article" date="2012" name="Proc. Natl. Acad. Sci. U.S.A.">
        <title>N-terminal acetylome analyses and functional insights of the N-terminal acetyltransferase NatB.</title>
        <authorList>
            <person name="Van Damme P."/>
            <person name="Lasa M."/>
            <person name="Polevoda B."/>
            <person name="Gazquez C."/>
            <person name="Elosegui-Artola A."/>
            <person name="Kim D.S."/>
            <person name="De Juan-Pardo E."/>
            <person name="Demeyer K."/>
            <person name="Hole K."/>
            <person name="Larrea E."/>
            <person name="Timmerman E."/>
            <person name="Prieto J."/>
            <person name="Arnesen T."/>
            <person name="Sherman F."/>
            <person name="Gevaert K."/>
            <person name="Aldabe R."/>
        </authorList>
    </citation>
    <scope>IDENTIFICATION BY MASS SPECTROMETRY [LARGE SCALE ANALYSIS]</scope>
</reference>
<reference key="13">
    <citation type="journal article" date="2008" name="Structure">
        <title>Structure of the yeast tRNA m7G methylation complex.</title>
        <authorList>
            <person name="Leulliot N."/>
            <person name="Chaillet M."/>
            <person name="Durand D."/>
            <person name="Ulryck N."/>
            <person name="Blondeau K."/>
            <person name="van Tilbeurgh H."/>
        </authorList>
    </citation>
    <scope>X-RAY CRYSTALLOGRAPHY (2.4 ANGSTROMS) OF 29-286 IN COMPLEX WITH S-ADENOSYL-L-METHIONINE AND TRM82</scope>
    <scope>SUBUNIT</scope>
    <scope>PROBABLE ACTIVE SITE</scope>
</reference>